<keyword id="KW-0963">Cytoplasm</keyword>
<keyword id="KW-0378">Hydrolase</keyword>
<keyword id="KW-1185">Reference proteome</keyword>
<keyword id="KW-0694">RNA-binding</keyword>
<keyword id="KW-0820">tRNA-binding</keyword>
<comment type="function">
    <text evidence="1">Hydrolyzes ribosome-free peptidyl-tRNAs (with 1 or more amino acids incorporated), which drop off the ribosome during protein synthesis, or as a result of ribosome stalling.</text>
</comment>
<comment type="function">
    <text evidence="1">Catalyzes the release of premature peptidyl moieties from peptidyl-tRNA molecules trapped in stalled 50S ribosomal subunits, and thus maintains levels of free tRNAs and 50S ribosomes.</text>
</comment>
<comment type="catalytic activity">
    <reaction evidence="1">
        <text>an N-acyl-L-alpha-aminoacyl-tRNA + H2O = an N-acyl-L-amino acid + a tRNA + H(+)</text>
        <dbReference type="Rhea" id="RHEA:54448"/>
        <dbReference type="Rhea" id="RHEA-COMP:10123"/>
        <dbReference type="Rhea" id="RHEA-COMP:13883"/>
        <dbReference type="ChEBI" id="CHEBI:15377"/>
        <dbReference type="ChEBI" id="CHEBI:15378"/>
        <dbReference type="ChEBI" id="CHEBI:59874"/>
        <dbReference type="ChEBI" id="CHEBI:78442"/>
        <dbReference type="ChEBI" id="CHEBI:138191"/>
        <dbReference type="EC" id="3.1.1.29"/>
    </reaction>
</comment>
<comment type="subunit">
    <text evidence="1">Monomer.</text>
</comment>
<comment type="subcellular location">
    <subcellularLocation>
        <location evidence="1">Cytoplasm</location>
    </subcellularLocation>
</comment>
<comment type="similarity">
    <text evidence="1">Belongs to the PTH family.</text>
</comment>
<sequence length="207" mass="23466">MKEIKLIVGLANPIKKYNDTRHNVGSWLVNSLVTQQNKKLKKNNKFLGYSTEINILSKNIHVLVPDTFMNLSGISVLAISNFYNIKLHEILVVHDELDLKPGNVKFRLRSSHNGHNGIRNVLAVLGTNIKFLRIQIGIGRPINSGYKISKFVLSKPNVSEKLLINRAILCAIRVIYDSINQRNVIMTESSLNSMLDHYMNSCVIHHN</sequence>
<organism>
    <name type="scientific">Buchnera aphidicola subsp. Baizongia pistaciae (strain Bp)</name>
    <dbReference type="NCBI Taxonomy" id="224915"/>
    <lineage>
        <taxon>Bacteria</taxon>
        <taxon>Pseudomonadati</taxon>
        <taxon>Pseudomonadota</taxon>
        <taxon>Gammaproteobacteria</taxon>
        <taxon>Enterobacterales</taxon>
        <taxon>Erwiniaceae</taxon>
        <taxon>Buchnera</taxon>
    </lineage>
</organism>
<dbReference type="EC" id="3.1.1.29" evidence="1"/>
<dbReference type="EMBL" id="AE016826">
    <property type="protein sequence ID" value="AAO26911.1"/>
    <property type="molecule type" value="Genomic_DNA"/>
</dbReference>
<dbReference type="RefSeq" id="WP_011091312.1">
    <property type="nucleotide sequence ID" value="NC_004545.1"/>
</dbReference>
<dbReference type="SMR" id="P59490"/>
<dbReference type="STRING" id="224915.bbp_179"/>
<dbReference type="KEGG" id="bab:bbp_179"/>
<dbReference type="eggNOG" id="COG0193">
    <property type="taxonomic scope" value="Bacteria"/>
</dbReference>
<dbReference type="HOGENOM" id="CLU_062456_3_1_6"/>
<dbReference type="OrthoDB" id="9800507at2"/>
<dbReference type="Proteomes" id="UP000000601">
    <property type="component" value="Chromosome"/>
</dbReference>
<dbReference type="GO" id="GO:0005737">
    <property type="term" value="C:cytoplasm"/>
    <property type="evidence" value="ECO:0007669"/>
    <property type="project" value="UniProtKB-SubCell"/>
</dbReference>
<dbReference type="GO" id="GO:0004045">
    <property type="term" value="F:peptidyl-tRNA hydrolase activity"/>
    <property type="evidence" value="ECO:0007669"/>
    <property type="project" value="UniProtKB-UniRule"/>
</dbReference>
<dbReference type="GO" id="GO:0000049">
    <property type="term" value="F:tRNA binding"/>
    <property type="evidence" value="ECO:0007669"/>
    <property type="project" value="UniProtKB-UniRule"/>
</dbReference>
<dbReference type="GO" id="GO:0006515">
    <property type="term" value="P:protein quality control for misfolded or incompletely synthesized proteins"/>
    <property type="evidence" value="ECO:0007669"/>
    <property type="project" value="UniProtKB-UniRule"/>
</dbReference>
<dbReference type="GO" id="GO:0072344">
    <property type="term" value="P:rescue of stalled ribosome"/>
    <property type="evidence" value="ECO:0007669"/>
    <property type="project" value="UniProtKB-UniRule"/>
</dbReference>
<dbReference type="CDD" id="cd00462">
    <property type="entry name" value="PTH"/>
    <property type="match status" value="1"/>
</dbReference>
<dbReference type="FunFam" id="3.40.50.1470:FF:000001">
    <property type="entry name" value="Peptidyl-tRNA hydrolase"/>
    <property type="match status" value="1"/>
</dbReference>
<dbReference type="Gene3D" id="3.40.50.1470">
    <property type="entry name" value="Peptidyl-tRNA hydrolase"/>
    <property type="match status" value="1"/>
</dbReference>
<dbReference type="HAMAP" id="MF_00083">
    <property type="entry name" value="Pept_tRNA_hydro_bact"/>
    <property type="match status" value="1"/>
</dbReference>
<dbReference type="InterPro" id="IPR001328">
    <property type="entry name" value="Pept_tRNA_hydro"/>
</dbReference>
<dbReference type="InterPro" id="IPR018171">
    <property type="entry name" value="Pept_tRNA_hydro_CS"/>
</dbReference>
<dbReference type="InterPro" id="IPR036416">
    <property type="entry name" value="Pept_tRNA_hydro_sf"/>
</dbReference>
<dbReference type="NCBIfam" id="TIGR00447">
    <property type="entry name" value="pth"/>
    <property type="match status" value="1"/>
</dbReference>
<dbReference type="PANTHER" id="PTHR17224">
    <property type="entry name" value="PEPTIDYL-TRNA HYDROLASE"/>
    <property type="match status" value="1"/>
</dbReference>
<dbReference type="PANTHER" id="PTHR17224:SF1">
    <property type="entry name" value="PEPTIDYL-TRNA HYDROLASE"/>
    <property type="match status" value="1"/>
</dbReference>
<dbReference type="Pfam" id="PF01195">
    <property type="entry name" value="Pept_tRNA_hydro"/>
    <property type="match status" value="1"/>
</dbReference>
<dbReference type="SUPFAM" id="SSF53178">
    <property type="entry name" value="Peptidyl-tRNA hydrolase-like"/>
    <property type="match status" value="1"/>
</dbReference>
<dbReference type="PROSITE" id="PS01195">
    <property type="entry name" value="PEPT_TRNA_HYDROL_1"/>
    <property type="match status" value="1"/>
</dbReference>
<dbReference type="PROSITE" id="PS01196">
    <property type="entry name" value="PEPT_TRNA_HYDROL_2"/>
    <property type="match status" value="1"/>
</dbReference>
<name>PTH_BUCBP</name>
<gene>
    <name evidence="1" type="primary">pth</name>
    <name type="ordered locus">bbp_179</name>
</gene>
<accession>P59490</accession>
<evidence type="ECO:0000255" key="1">
    <source>
        <dbReference type="HAMAP-Rule" id="MF_00083"/>
    </source>
</evidence>
<feature type="chain" id="PRO_0000187709" description="Peptidyl-tRNA hydrolase">
    <location>
        <begin position="1"/>
        <end position="207"/>
    </location>
</feature>
<feature type="active site" description="Proton acceptor" evidence="1">
    <location>
        <position position="22"/>
    </location>
</feature>
<feature type="binding site" evidence="1">
    <location>
        <position position="17"/>
    </location>
    <ligand>
        <name>tRNA</name>
        <dbReference type="ChEBI" id="CHEBI:17843"/>
    </ligand>
</feature>
<feature type="binding site" evidence="1">
    <location>
        <position position="68"/>
    </location>
    <ligand>
        <name>tRNA</name>
        <dbReference type="ChEBI" id="CHEBI:17843"/>
    </ligand>
</feature>
<feature type="binding site" evidence="1">
    <location>
        <position position="70"/>
    </location>
    <ligand>
        <name>tRNA</name>
        <dbReference type="ChEBI" id="CHEBI:17843"/>
    </ligand>
</feature>
<feature type="binding site" evidence="1">
    <location>
        <position position="116"/>
    </location>
    <ligand>
        <name>tRNA</name>
        <dbReference type="ChEBI" id="CHEBI:17843"/>
    </ligand>
</feature>
<feature type="site" description="Discriminates between blocked and unblocked aminoacyl-tRNA" evidence="1">
    <location>
        <position position="12"/>
    </location>
</feature>
<feature type="site" description="Stabilizes the basic form of H active site to accept a proton" evidence="1">
    <location>
        <position position="95"/>
    </location>
</feature>
<proteinExistence type="inferred from homology"/>
<protein>
    <recommendedName>
        <fullName evidence="1">Peptidyl-tRNA hydrolase</fullName>
        <shortName evidence="1">Pth</shortName>
        <ecNumber evidence="1">3.1.1.29</ecNumber>
    </recommendedName>
</protein>
<reference key="1">
    <citation type="journal article" date="2003" name="Proc. Natl. Acad. Sci. U.S.A.">
        <title>Reductive genome evolution in Buchnera aphidicola.</title>
        <authorList>
            <person name="van Ham R.C.H.J."/>
            <person name="Kamerbeek J."/>
            <person name="Palacios C."/>
            <person name="Rausell C."/>
            <person name="Abascal F."/>
            <person name="Bastolla U."/>
            <person name="Fernandez J.M."/>
            <person name="Jimenez L."/>
            <person name="Postigo M."/>
            <person name="Silva F.J."/>
            <person name="Tamames J."/>
            <person name="Viguera E."/>
            <person name="Latorre A."/>
            <person name="Valencia A."/>
            <person name="Moran F."/>
            <person name="Moya A."/>
        </authorList>
    </citation>
    <scope>NUCLEOTIDE SEQUENCE [LARGE SCALE GENOMIC DNA]</scope>
    <source>
        <strain>Bp</strain>
    </source>
</reference>